<keyword id="KW-0064">Aspartyl protease</keyword>
<keyword id="KW-0222">Digestion</keyword>
<keyword id="KW-1015">Disulfide bond</keyword>
<keyword id="KW-0378">Hydrolase</keyword>
<keyword id="KW-0597">Phosphoprotein</keyword>
<keyword id="KW-0645">Protease</keyword>
<keyword id="KW-1185">Reference proteome</keyword>
<keyword id="KW-0964">Secreted</keyword>
<keyword id="KW-0732">Signal</keyword>
<keyword id="KW-0865">Zymogen</keyword>
<proteinExistence type="evidence at transcript level"/>
<evidence type="ECO:0000250" key="1"/>
<evidence type="ECO:0000250" key="2">
    <source>
        <dbReference type="UniProtKB" id="P03954"/>
    </source>
</evidence>
<evidence type="ECO:0000255" key="3">
    <source>
        <dbReference type="PROSITE-ProRule" id="PRU01103"/>
    </source>
</evidence>
<evidence type="ECO:0000255" key="4">
    <source>
        <dbReference type="PROSITE-ProRule" id="PRU10094"/>
    </source>
</evidence>
<evidence type="ECO:0000305" key="5"/>
<dbReference type="EC" id="3.4.23.1"/>
<dbReference type="EMBL" id="M20788">
    <property type="protein sequence ID" value="AAA36902.1"/>
    <property type="molecule type" value="mRNA"/>
</dbReference>
<dbReference type="PIR" id="JT0309">
    <property type="entry name" value="PEMQAR"/>
</dbReference>
<dbReference type="RefSeq" id="NP_001098064.1">
    <property type="nucleotide sequence ID" value="NM_001104594.1"/>
</dbReference>
<dbReference type="SMR" id="P11489"/>
<dbReference type="FunCoup" id="P11489">
    <property type="interactions" value="90"/>
</dbReference>
<dbReference type="STRING" id="9544.ENSMMUP00000015085"/>
<dbReference type="MEROPS" id="A01.001"/>
<dbReference type="PaxDb" id="9544-ENSMMUP00000015085"/>
<dbReference type="GeneID" id="694562"/>
<dbReference type="KEGG" id="mcc:694562"/>
<dbReference type="CTD" id="643847"/>
<dbReference type="eggNOG" id="KOG1339">
    <property type="taxonomic scope" value="Eukaryota"/>
</dbReference>
<dbReference type="InParanoid" id="P11489"/>
<dbReference type="OrthoDB" id="9528103at2759"/>
<dbReference type="Proteomes" id="UP000006718">
    <property type="component" value="Unassembled WGS sequence"/>
</dbReference>
<dbReference type="GO" id="GO:0005576">
    <property type="term" value="C:extracellular region"/>
    <property type="evidence" value="ECO:0007669"/>
    <property type="project" value="UniProtKB-SubCell"/>
</dbReference>
<dbReference type="GO" id="GO:0004190">
    <property type="term" value="F:aspartic-type endopeptidase activity"/>
    <property type="evidence" value="ECO:0000318"/>
    <property type="project" value="GO_Central"/>
</dbReference>
<dbReference type="GO" id="GO:0007586">
    <property type="term" value="P:digestion"/>
    <property type="evidence" value="ECO:0007669"/>
    <property type="project" value="UniProtKB-KW"/>
</dbReference>
<dbReference type="GO" id="GO:0006508">
    <property type="term" value="P:proteolysis"/>
    <property type="evidence" value="ECO:0000318"/>
    <property type="project" value="GO_Central"/>
</dbReference>
<dbReference type="CDD" id="cd05478">
    <property type="entry name" value="pepsin_A"/>
    <property type="match status" value="1"/>
</dbReference>
<dbReference type="FunFam" id="2.40.70.10:FF:000006">
    <property type="entry name" value="Cathepsin E"/>
    <property type="match status" value="1"/>
</dbReference>
<dbReference type="FunFam" id="2.40.70.10:FF:000004">
    <property type="entry name" value="Pepsin A"/>
    <property type="match status" value="1"/>
</dbReference>
<dbReference type="Gene3D" id="6.10.140.60">
    <property type="match status" value="1"/>
</dbReference>
<dbReference type="Gene3D" id="2.40.70.10">
    <property type="entry name" value="Acid Proteases"/>
    <property type="match status" value="2"/>
</dbReference>
<dbReference type="InterPro" id="IPR001461">
    <property type="entry name" value="Aspartic_peptidase_A1"/>
</dbReference>
<dbReference type="InterPro" id="IPR001969">
    <property type="entry name" value="Aspartic_peptidase_AS"/>
</dbReference>
<dbReference type="InterPro" id="IPR012848">
    <property type="entry name" value="Aspartic_peptidase_N"/>
</dbReference>
<dbReference type="InterPro" id="IPR034162">
    <property type="entry name" value="Pepsin_A"/>
</dbReference>
<dbReference type="InterPro" id="IPR033121">
    <property type="entry name" value="PEPTIDASE_A1"/>
</dbReference>
<dbReference type="InterPro" id="IPR021109">
    <property type="entry name" value="Peptidase_aspartic_dom_sf"/>
</dbReference>
<dbReference type="PANTHER" id="PTHR47966">
    <property type="entry name" value="BETA-SITE APP-CLEAVING ENZYME, ISOFORM A-RELATED"/>
    <property type="match status" value="1"/>
</dbReference>
<dbReference type="PANTHER" id="PTHR47966:SF22">
    <property type="entry name" value="PEPSIN A-3-RELATED"/>
    <property type="match status" value="1"/>
</dbReference>
<dbReference type="Pfam" id="PF07966">
    <property type="entry name" value="A1_Propeptide"/>
    <property type="match status" value="1"/>
</dbReference>
<dbReference type="Pfam" id="PF00026">
    <property type="entry name" value="Asp"/>
    <property type="match status" value="1"/>
</dbReference>
<dbReference type="PRINTS" id="PR00792">
    <property type="entry name" value="PEPSIN"/>
</dbReference>
<dbReference type="SUPFAM" id="SSF50630">
    <property type="entry name" value="Acid proteases"/>
    <property type="match status" value="1"/>
</dbReference>
<dbReference type="PROSITE" id="PS00141">
    <property type="entry name" value="ASP_PROTEASE"/>
    <property type="match status" value="2"/>
</dbReference>
<dbReference type="PROSITE" id="PS51767">
    <property type="entry name" value="PEPTIDASE_A1"/>
    <property type="match status" value="1"/>
</dbReference>
<reference key="1">
    <citation type="journal article" date="1988" name="Gene">
        <title>Cloning and sequencing of rhesus monkey pepsinogen A cDNA.</title>
        <authorList>
            <person name="Evers M.P.J."/>
            <person name="Zelle B."/>
            <person name="Bebelman J.-P."/>
            <person name="Pronk J.C."/>
            <person name="Mager W.H."/>
            <person name="Planta R.J."/>
            <person name="Eriksson A.W."/>
            <person name="Frants R.R."/>
        </authorList>
    </citation>
    <scope>NUCLEOTIDE SEQUENCE [MRNA]</scope>
</reference>
<reference key="2">
    <citation type="submission" date="1988-09" db="EMBL/GenBank/DDBJ databases">
        <authorList>
            <person name="Zelle B."/>
        </authorList>
    </citation>
    <scope>SEQUENCE REVISION</scope>
</reference>
<gene>
    <name type="primary">PGA</name>
</gene>
<feature type="signal peptide">
    <location>
        <begin position="1"/>
        <end position="15"/>
    </location>
</feature>
<feature type="propeptide" id="PRO_0000026024" description="Activation peptide">
    <location>
        <begin position="16"/>
        <end position="62"/>
    </location>
</feature>
<feature type="chain" id="PRO_0000026025" description="Pepsin A">
    <location>
        <begin position="63"/>
        <end position="388"/>
    </location>
</feature>
<feature type="domain" description="Peptidase A1" evidence="3">
    <location>
        <begin position="76"/>
        <end position="385"/>
    </location>
</feature>
<feature type="active site">
    <location>
        <position position="94"/>
    </location>
</feature>
<feature type="active site">
    <location>
        <position position="277"/>
    </location>
</feature>
<feature type="modified residue" description="Phosphoserine" evidence="2">
    <location>
        <position position="130"/>
    </location>
</feature>
<feature type="disulfide bond" evidence="1">
    <location>
        <begin position="107"/>
        <end position="112"/>
    </location>
</feature>
<feature type="disulfide bond" evidence="1">
    <location>
        <begin position="268"/>
        <end position="272"/>
    </location>
</feature>
<feature type="disulfide bond" evidence="1">
    <location>
        <begin position="311"/>
        <end position="344"/>
    </location>
</feature>
<accession>P11489</accession>
<name>PEPA_MACMU</name>
<comment type="function">
    <text>Shows particularly broad specificity; although bonds involving phenylalanine and leucine are preferred, many others are also cleaved to some extent.</text>
</comment>
<comment type="catalytic activity">
    <reaction evidence="4">
        <text>Preferential cleavage: hydrophobic, preferably aromatic, residues in P1 and P1' positions. Cleaves 1-Phe-|-Val-2, 4-Gln-|-His-5, 13-Glu-|-Ala-14, 14-Ala-|-Leu-15, 15-Leu-|-Tyr-16, 16-Tyr-|-Leu-17, 23-Gly-|-Phe-24, 24-Phe-|-Phe-25 and 25-Phe-|-Tyr-26 bonds in the B chain of insulin.</text>
        <dbReference type="EC" id="3.4.23.1"/>
    </reaction>
</comment>
<comment type="subcellular location">
    <subcellularLocation>
        <location>Secreted</location>
    </subcellularLocation>
</comment>
<comment type="similarity">
    <text evidence="5">Belongs to the peptidase A1 family.</text>
</comment>
<sequence length="388" mass="41697">MKWLLLLGLVALSECIIYKVPLVRKKSLRRNLSEHGLLKDFLKKHNRNPASKYFPQTEAPTLIDEQPLENYLDVEYFGTIGIGTPAQDFTVIFDTGSSNLWVPSVYCSSLACTNHNLFNPQDSSTYQSTSGTLSITYGTGSMTGILGYDTVQVGGISDTNQIFGLSETEPGSFLYYAPFDGILGLAYPSISSSGATPVFDNIWDQGLVSQDLFSVYLSADDQSGSVVIFGGIDSSYYTGSLNWVPVSVEGYWQISVDSITMNGEAIACAEGCQAIVDTGTSLLTGPTSPIANIQSDIGASENSDGEMVVSCSAISSLPDIVFTINGVQYPLPPSAYILQSQGSCTSGFQGMDVPTESGELWILGDVFIRQYFTVFDRANNQVGLAPVA</sequence>
<organism>
    <name type="scientific">Macaca mulatta</name>
    <name type="common">Rhesus macaque</name>
    <dbReference type="NCBI Taxonomy" id="9544"/>
    <lineage>
        <taxon>Eukaryota</taxon>
        <taxon>Metazoa</taxon>
        <taxon>Chordata</taxon>
        <taxon>Craniata</taxon>
        <taxon>Vertebrata</taxon>
        <taxon>Euteleostomi</taxon>
        <taxon>Mammalia</taxon>
        <taxon>Eutheria</taxon>
        <taxon>Euarchontoglires</taxon>
        <taxon>Primates</taxon>
        <taxon>Haplorrhini</taxon>
        <taxon>Catarrhini</taxon>
        <taxon>Cercopithecidae</taxon>
        <taxon>Cercopithecinae</taxon>
        <taxon>Macaca</taxon>
    </lineage>
</organism>
<protein>
    <recommendedName>
        <fullName>Pepsin A</fullName>
        <ecNumber>3.4.23.1</ecNumber>
    </recommendedName>
</protein>